<evidence type="ECO:0000255" key="1"/>
<evidence type="ECO:0000305" key="2"/>
<feature type="chain" id="PRO_0000084590" description="Cell division cycle protein 48 homolog AF_1297">
    <location>
        <begin position="1"/>
        <end position="733"/>
    </location>
</feature>
<feature type="binding site" evidence="1">
    <location>
        <begin position="223"/>
        <end position="230"/>
    </location>
    <ligand>
        <name>ATP</name>
        <dbReference type="ChEBI" id="CHEBI:30616"/>
    </ligand>
</feature>
<feature type="binding site" evidence="1">
    <location>
        <begin position="496"/>
        <end position="503"/>
    </location>
    <ligand>
        <name>ATP</name>
        <dbReference type="ChEBI" id="CHEBI:30616"/>
    </ligand>
</feature>
<gene>
    <name type="ordered locus">AF_1297</name>
</gene>
<name>Y1297_ARCFU</name>
<proteinExistence type="inferred from homology"/>
<accession>O28972</accession>
<reference key="1">
    <citation type="journal article" date="1997" name="Nature">
        <title>The complete genome sequence of the hyperthermophilic, sulphate-reducing archaeon Archaeoglobus fulgidus.</title>
        <authorList>
            <person name="Klenk H.-P."/>
            <person name="Clayton R.A."/>
            <person name="Tomb J.-F."/>
            <person name="White O."/>
            <person name="Nelson K.E."/>
            <person name="Ketchum K.A."/>
            <person name="Dodson R.J."/>
            <person name="Gwinn M.L."/>
            <person name="Hickey E.K."/>
            <person name="Peterson J.D."/>
            <person name="Richardson D.L."/>
            <person name="Kerlavage A.R."/>
            <person name="Graham D.E."/>
            <person name="Kyrpides N.C."/>
            <person name="Fleischmann R.D."/>
            <person name="Quackenbush J."/>
            <person name="Lee N.H."/>
            <person name="Sutton G.G."/>
            <person name="Gill S.R."/>
            <person name="Kirkness E.F."/>
            <person name="Dougherty B.A."/>
            <person name="McKenney K."/>
            <person name="Adams M.D."/>
            <person name="Loftus B.J."/>
            <person name="Peterson S.N."/>
            <person name="Reich C.I."/>
            <person name="McNeil L.K."/>
            <person name="Badger J.H."/>
            <person name="Glodek A."/>
            <person name="Zhou L."/>
            <person name="Overbeek R."/>
            <person name="Gocayne J.D."/>
            <person name="Weidman J.F."/>
            <person name="McDonald L.A."/>
            <person name="Utterback T.R."/>
            <person name="Cotton M.D."/>
            <person name="Spriggs T."/>
            <person name="Artiach P."/>
            <person name="Kaine B.P."/>
            <person name="Sykes S.M."/>
            <person name="Sadow P.W."/>
            <person name="D'Andrea K.P."/>
            <person name="Bowman C."/>
            <person name="Fujii C."/>
            <person name="Garland S.A."/>
            <person name="Mason T.M."/>
            <person name="Olsen G.J."/>
            <person name="Fraser C.M."/>
            <person name="Smith H.O."/>
            <person name="Woese C.R."/>
            <person name="Venter J.C."/>
        </authorList>
    </citation>
    <scope>NUCLEOTIDE SEQUENCE [LARGE SCALE GENOMIC DNA]</scope>
    <source>
        <strain>ATCC 49558 / DSM 4304 / JCM 9628 / NBRC 100126 / VC-16</strain>
    </source>
</reference>
<keyword id="KW-0067">ATP-binding</keyword>
<keyword id="KW-0547">Nucleotide-binding</keyword>
<keyword id="KW-1185">Reference proteome</keyword>
<keyword id="KW-0677">Repeat</keyword>
<organism>
    <name type="scientific">Archaeoglobus fulgidus (strain ATCC 49558 / DSM 4304 / JCM 9628 / NBRC 100126 / VC-16)</name>
    <dbReference type="NCBI Taxonomy" id="224325"/>
    <lineage>
        <taxon>Archaea</taxon>
        <taxon>Methanobacteriati</taxon>
        <taxon>Methanobacteriota</taxon>
        <taxon>Archaeoglobi</taxon>
        <taxon>Archaeoglobales</taxon>
        <taxon>Archaeoglobaceae</taxon>
        <taxon>Archaeoglobus</taxon>
    </lineage>
</organism>
<protein>
    <recommendedName>
        <fullName>Cell division cycle protein 48 homolog AF_1297</fullName>
    </recommendedName>
</protein>
<sequence>MSDKKGEEITLRVAEAFYRDVGRGVARIDPAVMEKYGLQSGDIIEIIGKSTVPAIVWPSYPEDRGTGIIRIDGSIRSNAGVGIDDKVRIRKVTAKPAEKVTLAPTEPVRLMGGEAYLLRLLEGRPVIKGQKIRVEVFGHTLTFVITATRPSGVVVVTRNTAIELKEKPAEEVKRAVPDVTYEDIGGLKRELRLVREMIELPLKHPELFQRLGIEPPKGVLLYGPPGTGKTLIAKAVANEVDAHFIPISGPEIMSKYYGESEQRLREIFEEAKENAPSIIFIDEIDSIAPKREEVTGEVERRVVAQLLALMDGLEARGDVIVIAATNRPDAIDPALRRPGRFDREIEIGVPDKEGRKEILEIHTRKMPLAEDVDLEELAELTNGFVGADLEALCKEAAMHALRRVLPEIDIEAEEIPAEVIENLKVTREDFMEALKNIEPSAMREVLVEVPNVKWEDIGGLEHAKQELMEAVEWPLKYPEVFRAANIKPPRGILLFGPPGTGKTLLAKAVANESNANFISVKGPELLSKWVGESEKHVREMFRKARQVAPCVIFFDEIDSLAPRRGGIGDSHVTERVVSQLLTELDGLEELKDVVVIAATNRPDMIDPALLRPGRLERHIYIPPPDKKARVEIFKIHLRGKPLADDVNIEELAEKTEGYSGADIEAVCREAGMLAIRELIKPGMTREEAKEAAKKLKITKKHFEEALKKVRPSLTKEDVEKYEKLIEDFHRMYA</sequence>
<comment type="similarity">
    <text evidence="2">Belongs to the AAA ATPase family. CDC48 subfamily.</text>
</comment>
<dbReference type="EMBL" id="AE000782">
    <property type="protein sequence ID" value="AAB89948.1"/>
    <property type="molecule type" value="Genomic_DNA"/>
</dbReference>
<dbReference type="PIR" id="H69411">
    <property type="entry name" value="H69411"/>
</dbReference>
<dbReference type="RefSeq" id="WP_010878793.1">
    <property type="nucleotide sequence ID" value="NC_000917.1"/>
</dbReference>
<dbReference type="SMR" id="O28972"/>
<dbReference type="STRING" id="224325.AF_1297"/>
<dbReference type="PaxDb" id="224325-AF_1297"/>
<dbReference type="EnsemblBacteria" id="AAB89948">
    <property type="protein sequence ID" value="AAB89948"/>
    <property type="gene ID" value="AF_1297"/>
</dbReference>
<dbReference type="KEGG" id="afu:AF_1297"/>
<dbReference type="eggNOG" id="arCOG01308">
    <property type="taxonomic scope" value="Archaea"/>
</dbReference>
<dbReference type="HOGENOM" id="CLU_000688_12_2_2"/>
<dbReference type="OrthoDB" id="77269at2157"/>
<dbReference type="PhylomeDB" id="O28972"/>
<dbReference type="Proteomes" id="UP000002199">
    <property type="component" value="Chromosome"/>
</dbReference>
<dbReference type="GO" id="GO:0005737">
    <property type="term" value="C:cytoplasm"/>
    <property type="evidence" value="ECO:0007669"/>
    <property type="project" value="UniProtKB-ARBA"/>
</dbReference>
<dbReference type="GO" id="GO:0043231">
    <property type="term" value="C:intracellular membrane-bounded organelle"/>
    <property type="evidence" value="ECO:0007669"/>
    <property type="project" value="UniProtKB-ARBA"/>
</dbReference>
<dbReference type="GO" id="GO:0005524">
    <property type="term" value="F:ATP binding"/>
    <property type="evidence" value="ECO:0007669"/>
    <property type="project" value="UniProtKB-KW"/>
</dbReference>
<dbReference type="GO" id="GO:0016887">
    <property type="term" value="F:ATP hydrolysis activity"/>
    <property type="evidence" value="ECO:0007669"/>
    <property type="project" value="InterPro"/>
</dbReference>
<dbReference type="CDD" id="cd19519">
    <property type="entry name" value="RecA-like_CDC48_r1-like"/>
    <property type="match status" value="1"/>
</dbReference>
<dbReference type="CDD" id="cd19529">
    <property type="entry name" value="RecA-like_VCP_r2"/>
    <property type="match status" value="1"/>
</dbReference>
<dbReference type="FunFam" id="2.40.40.20:FF:000007">
    <property type="entry name" value="AAA family ATPase"/>
    <property type="match status" value="1"/>
</dbReference>
<dbReference type="FunFam" id="1.10.8.60:FF:000057">
    <property type="entry name" value="AAA family ATPase, CDC48 subfamily"/>
    <property type="match status" value="1"/>
</dbReference>
<dbReference type="FunFam" id="1.10.8.60:FF:000189">
    <property type="entry name" value="AAA family ATPase, CDC48 subfamily"/>
    <property type="match status" value="1"/>
</dbReference>
<dbReference type="FunFam" id="3.40.50.300:FF:000018">
    <property type="entry name" value="Cell division control 48"/>
    <property type="match status" value="1"/>
</dbReference>
<dbReference type="FunFam" id="3.40.50.300:FF:000012">
    <property type="entry name" value="Transitional endoplasmic reticulum ATPase"/>
    <property type="match status" value="1"/>
</dbReference>
<dbReference type="Gene3D" id="1.10.8.60">
    <property type="match status" value="2"/>
</dbReference>
<dbReference type="Gene3D" id="2.40.40.20">
    <property type="match status" value="1"/>
</dbReference>
<dbReference type="Gene3D" id="3.10.330.10">
    <property type="match status" value="1"/>
</dbReference>
<dbReference type="Gene3D" id="3.40.50.300">
    <property type="entry name" value="P-loop containing nucleotide triphosphate hydrolases"/>
    <property type="match status" value="2"/>
</dbReference>
<dbReference type="InterPro" id="IPR003593">
    <property type="entry name" value="AAA+_ATPase"/>
</dbReference>
<dbReference type="InterPro" id="IPR005938">
    <property type="entry name" value="AAA_ATPase_CDC48"/>
</dbReference>
<dbReference type="InterPro" id="IPR050168">
    <property type="entry name" value="AAA_ATPase_domain"/>
</dbReference>
<dbReference type="InterPro" id="IPR041569">
    <property type="entry name" value="AAA_lid_3"/>
</dbReference>
<dbReference type="InterPro" id="IPR009010">
    <property type="entry name" value="Asp_de-COase-like_dom_sf"/>
</dbReference>
<dbReference type="InterPro" id="IPR003959">
    <property type="entry name" value="ATPase_AAA_core"/>
</dbReference>
<dbReference type="InterPro" id="IPR003960">
    <property type="entry name" value="ATPase_AAA_CS"/>
</dbReference>
<dbReference type="InterPro" id="IPR004201">
    <property type="entry name" value="Cdc48_dom2"/>
</dbReference>
<dbReference type="InterPro" id="IPR029067">
    <property type="entry name" value="CDC48_domain_2-like_sf"/>
</dbReference>
<dbReference type="InterPro" id="IPR003338">
    <property type="entry name" value="CDC4_N-term_subdom"/>
</dbReference>
<dbReference type="InterPro" id="IPR027417">
    <property type="entry name" value="P-loop_NTPase"/>
</dbReference>
<dbReference type="InterPro" id="IPR015415">
    <property type="entry name" value="Spast_Vps4_C"/>
</dbReference>
<dbReference type="NCBIfam" id="TIGR01243">
    <property type="entry name" value="CDC48"/>
    <property type="match status" value="1"/>
</dbReference>
<dbReference type="PANTHER" id="PTHR23077">
    <property type="entry name" value="AAA-FAMILY ATPASE"/>
    <property type="match status" value="1"/>
</dbReference>
<dbReference type="PANTHER" id="PTHR23077:SF171">
    <property type="entry name" value="NUCLEAR VALOSIN-CONTAINING PROTEIN-LIKE"/>
    <property type="match status" value="1"/>
</dbReference>
<dbReference type="Pfam" id="PF00004">
    <property type="entry name" value="AAA"/>
    <property type="match status" value="2"/>
</dbReference>
<dbReference type="Pfam" id="PF17862">
    <property type="entry name" value="AAA_lid_3"/>
    <property type="match status" value="2"/>
</dbReference>
<dbReference type="Pfam" id="PF02933">
    <property type="entry name" value="CDC48_2"/>
    <property type="match status" value="1"/>
</dbReference>
<dbReference type="Pfam" id="PF02359">
    <property type="entry name" value="CDC48_N"/>
    <property type="match status" value="1"/>
</dbReference>
<dbReference type="Pfam" id="PF09336">
    <property type="entry name" value="Vps4_C"/>
    <property type="match status" value="1"/>
</dbReference>
<dbReference type="SMART" id="SM00382">
    <property type="entry name" value="AAA"/>
    <property type="match status" value="2"/>
</dbReference>
<dbReference type="SMART" id="SM01072">
    <property type="entry name" value="CDC48_2"/>
    <property type="match status" value="1"/>
</dbReference>
<dbReference type="SMART" id="SM01073">
    <property type="entry name" value="CDC48_N"/>
    <property type="match status" value="1"/>
</dbReference>
<dbReference type="SUPFAM" id="SSF50692">
    <property type="entry name" value="ADC-like"/>
    <property type="match status" value="1"/>
</dbReference>
<dbReference type="SUPFAM" id="SSF54585">
    <property type="entry name" value="Cdc48 domain 2-like"/>
    <property type="match status" value="1"/>
</dbReference>
<dbReference type="SUPFAM" id="SSF52540">
    <property type="entry name" value="P-loop containing nucleoside triphosphate hydrolases"/>
    <property type="match status" value="2"/>
</dbReference>
<dbReference type="PROSITE" id="PS00674">
    <property type="entry name" value="AAA"/>
    <property type="match status" value="2"/>
</dbReference>